<sequence length="317" mass="36652">MGEVQREKVAVIIGPTAVGKTKLSIDLAKALNGEIISGDSMQIYRTMDIGTAKVTKEEMDGIPHYMVDIKNPEESFSVAEFQERVRKHIREITERGKLPIIVGGTGLYIQSVLFDYQFTDDAGDAIYREQMEKLALERGVEYVHKKLQEVDPESAERIHANNVRRVIRALEIFHTSGEKMSDQLEKQENELLYDVSLIGLTMDREMLYDRINLRVDIMMDQGLLEEVEGLYNRGIRDCQSIQAIGYKEIYDYFEDRVSLEEAVSQLKTNSRRYAKRQLTWFRNKMDVTWFDVTDGEKTSEILRYIEGKLQLKSNNSK</sequence>
<comment type="function">
    <text evidence="1">Catalyzes the transfer of a dimethylallyl group onto the adenine at position 37 in tRNAs that read codons beginning with uridine, leading to the formation of N6-(dimethylallyl)adenosine (i(6)A).</text>
</comment>
<comment type="catalytic activity">
    <reaction evidence="1">
        <text>adenosine(37) in tRNA + dimethylallyl diphosphate = N(6)-dimethylallyladenosine(37) in tRNA + diphosphate</text>
        <dbReference type="Rhea" id="RHEA:26482"/>
        <dbReference type="Rhea" id="RHEA-COMP:10162"/>
        <dbReference type="Rhea" id="RHEA-COMP:10375"/>
        <dbReference type="ChEBI" id="CHEBI:33019"/>
        <dbReference type="ChEBI" id="CHEBI:57623"/>
        <dbReference type="ChEBI" id="CHEBI:74411"/>
        <dbReference type="ChEBI" id="CHEBI:74415"/>
        <dbReference type="EC" id="2.5.1.75"/>
    </reaction>
</comment>
<comment type="cofactor">
    <cofactor evidence="1">
        <name>Mg(2+)</name>
        <dbReference type="ChEBI" id="CHEBI:18420"/>
    </cofactor>
</comment>
<comment type="subunit">
    <text evidence="1">Monomer.</text>
</comment>
<comment type="similarity">
    <text evidence="1">Belongs to the IPP transferase family.</text>
</comment>
<keyword id="KW-0067">ATP-binding</keyword>
<keyword id="KW-0460">Magnesium</keyword>
<keyword id="KW-0547">Nucleotide-binding</keyword>
<keyword id="KW-0808">Transferase</keyword>
<keyword id="KW-0819">tRNA processing</keyword>
<evidence type="ECO:0000255" key="1">
    <source>
        <dbReference type="HAMAP-Rule" id="MF_00185"/>
    </source>
</evidence>
<gene>
    <name evidence="1" type="primary">miaA</name>
    <name type="ordered locus">BAMEG_0790</name>
</gene>
<name>MIAA_BACAC</name>
<proteinExistence type="inferred from homology"/>
<reference key="1">
    <citation type="submission" date="2008-10" db="EMBL/GenBank/DDBJ databases">
        <title>Genome sequence of Bacillus anthracis str. CDC 684.</title>
        <authorList>
            <person name="Dodson R.J."/>
            <person name="Munk A.C."/>
            <person name="Brettin T."/>
            <person name="Bruce D."/>
            <person name="Detter C."/>
            <person name="Tapia R."/>
            <person name="Han C."/>
            <person name="Sutton G."/>
            <person name="Sims D."/>
        </authorList>
    </citation>
    <scope>NUCLEOTIDE SEQUENCE [LARGE SCALE GENOMIC DNA]</scope>
    <source>
        <strain>CDC 684 / NRRL 3495</strain>
    </source>
</reference>
<accession>C3L886</accession>
<organism>
    <name type="scientific">Bacillus anthracis (strain CDC 684 / NRRL 3495)</name>
    <dbReference type="NCBI Taxonomy" id="568206"/>
    <lineage>
        <taxon>Bacteria</taxon>
        <taxon>Bacillati</taxon>
        <taxon>Bacillota</taxon>
        <taxon>Bacilli</taxon>
        <taxon>Bacillales</taxon>
        <taxon>Bacillaceae</taxon>
        <taxon>Bacillus</taxon>
        <taxon>Bacillus cereus group</taxon>
    </lineage>
</organism>
<feature type="chain" id="PRO_1000124162" description="tRNA dimethylallyltransferase">
    <location>
        <begin position="1"/>
        <end position="317"/>
    </location>
</feature>
<feature type="region of interest" description="Interaction with substrate tRNA" evidence="1">
    <location>
        <begin position="39"/>
        <end position="42"/>
    </location>
</feature>
<feature type="binding site" evidence="1">
    <location>
        <begin position="14"/>
        <end position="21"/>
    </location>
    <ligand>
        <name>ATP</name>
        <dbReference type="ChEBI" id="CHEBI:30616"/>
    </ligand>
</feature>
<feature type="binding site" evidence="1">
    <location>
        <begin position="16"/>
        <end position="21"/>
    </location>
    <ligand>
        <name>substrate</name>
    </ligand>
</feature>
<feature type="site" description="Interaction with substrate tRNA" evidence="1">
    <location>
        <position position="105"/>
    </location>
</feature>
<dbReference type="EC" id="2.5.1.75" evidence="1"/>
<dbReference type="EMBL" id="CP001215">
    <property type="protein sequence ID" value="ACP17461.1"/>
    <property type="molecule type" value="Genomic_DNA"/>
</dbReference>
<dbReference type="RefSeq" id="WP_000504940.1">
    <property type="nucleotide sequence ID" value="NC_012581.1"/>
</dbReference>
<dbReference type="SMR" id="C3L886"/>
<dbReference type="GeneID" id="45023542"/>
<dbReference type="KEGG" id="bah:BAMEG_0790"/>
<dbReference type="HOGENOM" id="CLU_032616_0_1_9"/>
<dbReference type="GO" id="GO:0005524">
    <property type="term" value="F:ATP binding"/>
    <property type="evidence" value="ECO:0007669"/>
    <property type="project" value="UniProtKB-UniRule"/>
</dbReference>
<dbReference type="GO" id="GO:0052381">
    <property type="term" value="F:tRNA dimethylallyltransferase activity"/>
    <property type="evidence" value="ECO:0007669"/>
    <property type="project" value="UniProtKB-UniRule"/>
</dbReference>
<dbReference type="GO" id="GO:0006400">
    <property type="term" value="P:tRNA modification"/>
    <property type="evidence" value="ECO:0007669"/>
    <property type="project" value="TreeGrafter"/>
</dbReference>
<dbReference type="FunFam" id="1.10.20.140:FF:000001">
    <property type="entry name" value="tRNA dimethylallyltransferase"/>
    <property type="match status" value="1"/>
</dbReference>
<dbReference type="Gene3D" id="1.10.20.140">
    <property type="match status" value="1"/>
</dbReference>
<dbReference type="Gene3D" id="3.40.50.300">
    <property type="entry name" value="P-loop containing nucleotide triphosphate hydrolases"/>
    <property type="match status" value="1"/>
</dbReference>
<dbReference type="HAMAP" id="MF_00185">
    <property type="entry name" value="IPP_trans"/>
    <property type="match status" value="1"/>
</dbReference>
<dbReference type="InterPro" id="IPR039657">
    <property type="entry name" value="Dimethylallyltransferase"/>
</dbReference>
<dbReference type="InterPro" id="IPR018022">
    <property type="entry name" value="IPT"/>
</dbReference>
<dbReference type="InterPro" id="IPR027417">
    <property type="entry name" value="P-loop_NTPase"/>
</dbReference>
<dbReference type="NCBIfam" id="TIGR00174">
    <property type="entry name" value="miaA"/>
    <property type="match status" value="1"/>
</dbReference>
<dbReference type="PANTHER" id="PTHR11088">
    <property type="entry name" value="TRNA DIMETHYLALLYLTRANSFERASE"/>
    <property type="match status" value="1"/>
</dbReference>
<dbReference type="PANTHER" id="PTHR11088:SF60">
    <property type="entry name" value="TRNA DIMETHYLALLYLTRANSFERASE"/>
    <property type="match status" value="1"/>
</dbReference>
<dbReference type="Pfam" id="PF01715">
    <property type="entry name" value="IPPT"/>
    <property type="match status" value="1"/>
</dbReference>
<dbReference type="SUPFAM" id="SSF52540">
    <property type="entry name" value="P-loop containing nucleoside triphosphate hydrolases"/>
    <property type="match status" value="2"/>
</dbReference>
<protein>
    <recommendedName>
        <fullName evidence="1">tRNA dimethylallyltransferase</fullName>
        <ecNumber evidence="1">2.5.1.75</ecNumber>
    </recommendedName>
    <alternativeName>
        <fullName evidence="1">Dimethylallyl diphosphate:tRNA dimethylallyltransferase</fullName>
        <shortName evidence="1">DMAPP:tRNA dimethylallyltransferase</shortName>
        <shortName evidence="1">DMATase</shortName>
    </alternativeName>
    <alternativeName>
        <fullName evidence="1">Isopentenyl-diphosphate:tRNA isopentenyltransferase</fullName>
        <shortName evidence="1">IPP transferase</shortName>
        <shortName evidence="1">IPPT</shortName>
        <shortName evidence="1">IPTase</shortName>
    </alternativeName>
</protein>